<protein>
    <recommendedName>
        <fullName evidence="1">Large ribosomal subunit protein bL32</fullName>
    </recommendedName>
    <alternativeName>
        <fullName evidence="3">50S ribosomal protein L32</fullName>
    </alternativeName>
</protein>
<gene>
    <name evidence="1" type="primary">rpmF</name>
    <name type="ordered locus">Sbal195_1755</name>
</gene>
<comment type="similarity">
    <text evidence="1">Belongs to the bacterial ribosomal protein bL32 family.</text>
</comment>
<sequence>MAVQQNKKSRSKRGMRRSHDALSTAQLSVDATSGEIHMRHNVTADGFYRGKKVINK</sequence>
<keyword id="KW-0687">Ribonucleoprotein</keyword>
<keyword id="KW-0689">Ribosomal protein</keyword>
<feature type="chain" id="PRO_1000079343" description="Large ribosomal subunit protein bL32">
    <location>
        <begin position="1"/>
        <end position="56"/>
    </location>
</feature>
<feature type="region of interest" description="Disordered" evidence="2">
    <location>
        <begin position="1"/>
        <end position="26"/>
    </location>
</feature>
<feature type="compositionally biased region" description="Basic residues" evidence="2">
    <location>
        <begin position="7"/>
        <end position="16"/>
    </location>
</feature>
<proteinExistence type="inferred from homology"/>
<organism>
    <name type="scientific">Shewanella baltica (strain OS195)</name>
    <dbReference type="NCBI Taxonomy" id="399599"/>
    <lineage>
        <taxon>Bacteria</taxon>
        <taxon>Pseudomonadati</taxon>
        <taxon>Pseudomonadota</taxon>
        <taxon>Gammaproteobacteria</taxon>
        <taxon>Alteromonadales</taxon>
        <taxon>Shewanellaceae</taxon>
        <taxon>Shewanella</taxon>
    </lineage>
</organism>
<evidence type="ECO:0000255" key="1">
    <source>
        <dbReference type="HAMAP-Rule" id="MF_00340"/>
    </source>
</evidence>
<evidence type="ECO:0000256" key="2">
    <source>
        <dbReference type="SAM" id="MobiDB-lite"/>
    </source>
</evidence>
<evidence type="ECO:0000305" key="3"/>
<reference key="1">
    <citation type="submission" date="2007-11" db="EMBL/GenBank/DDBJ databases">
        <title>Complete sequence of chromosome of Shewanella baltica OS195.</title>
        <authorList>
            <consortium name="US DOE Joint Genome Institute"/>
            <person name="Copeland A."/>
            <person name="Lucas S."/>
            <person name="Lapidus A."/>
            <person name="Barry K."/>
            <person name="Glavina del Rio T."/>
            <person name="Dalin E."/>
            <person name="Tice H."/>
            <person name="Pitluck S."/>
            <person name="Chain P."/>
            <person name="Malfatti S."/>
            <person name="Shin M."/>
            <person name="Vergez L."/>
            <person name="Schmutz J."/>
            <person name="Larimer F."/>
            <person name="Land M."/>
            <person name="Hauser L."/>
            <person name="Kyrpides N."/>
            <person name="Kim E."/>
            <person name="Brettar I."/>
            <person name="Rodrigues J."/>
            <person name="Konstantinidis K."/>
            <person name="Klappenbach J."/>
            <person name="Hofle M."/>
            <person name="Tiedje J."/>
            <person name="Richardson P."/>
        </authorList>
    </citation>
    <scope>NUCLEOTIDE SEQUENCE [LARGE SCALE GENOMIC DNA]</scope>
    <source>
        <strain>OS195</strain>
    </source>
</reference>
<accession>A9KXI7</accession>
<name>RL32_SHEB9</name>
<dbReference type="EMBL" id="CP000891">
    <property type="protein sequence ID" value="ABX48926.1"/>
    <property type="molecule type" value="Genomic_DNA"/>
</dbReference>
<dbReference type="RefSeq" id="WP_006081226.1">
    <property type="nucleotide sequence ID" value="NC_009997.1"/>
</dbReference>
<dbReference type="SMR" id="A9KXI7"/>
<dbReference type="GeneID" id="67443097"/>
<dbReference type="KEGG" id="sbn:Sbal195_1755"/>
<dbReference type="HOGENOM" id="CLU_129084_2_1_6"/>
<dbReference type="Proteomes" id="UP000000770">
    <property type="component" value="Chromosome"/>
</dbReference>
<dbReference type="GO" id="GO:0015934">
    <property type="term" value="C:large ribosomal subunit"/>
    <property type="evidence" value="ECO:0007669"/>
    <property type="project" value="InterPro"/>
</dbReference>
<dbReference type="GO" id="GO:0003735">
    <property type="term" value="F:structural constituent of ribosome"/>
    <property type="evidence" value="ECO:0007669"/>
    <property type="project" value="InterPro"/>
</dbReference>
<dbReference type="GO" id="GO:0006412">
    <property type="term" value="P:translation"/>
    <property type="evidence" value="ECO:0007669"/>
    <property type="project" value="UniProtKB-UniRule"/>
</dbReference>
<dbReference type="HAMAP" id="MF_00340">
    <property type="entry name" value="Ribosomal_bL32"/>
    <property type="match status" value="1"/>
</dbReference>
<dbReference type="InterPro" id="IPR002677">
    <property type="entry name" value="Ribosomal_bL32"/>
</dbReference>
<dbReference type="InterPro" id="IPR044957">
    <property type="entry name" value="Ribosomal_bL32_bact"/>
</dbReference>
<dbReference type="InterPro" id="IPR011332">
    <property type="entry name" value="Ribosomal_zn-bd"/>
</dbReference>
<dbReference type="NCBIfam" id="TIGR01031">
    <property type="entry name" value="rpmF_bact"/>
    <property type="match status" value="1"/>
</dbReference>
<dbReference type="PANTHER" id="PTHR35534">
    <property type="entry name" value="50S RIBOSOMAL PROTEIN L32"/>
    <property type="match status" value="1"/>
</dbReference>
<dbReference type="PANTHER" id="PTHR35534:SF1">
    <property type="entry name" value="LARGE RIBOSOMAL SUBUNIT PROTEIN BL32"/>
    <property type="match status" value="1"/>
</dbReference>
<dbReference type="Pfam" id="PF01783">
    <property type="entry name" value="Ribosomal_L32p"/>
    <property type="match status" value="1"/>
</dbReference>
<dbReference type="SUPFAM" id="SSF57829">
    <property type="entry name" value="Zn-binding ribosomal proteins"/>
    <property type="match status" value="1"/>
</dbReference>